<gene>
    <name type="primary">Wap</name>
</gene>
<keyword id="KW-1015">Disulfide bond</keyword>
<keyword id="KW-0494">Milk protein</keyword>
<keyword id="KW-0646">Protease inhibitor</keyword>
<keyword id="KW-1185">Reference proteome</keyword>
<keyword id="KW-0677">Repeat</keyword>
<keyword id="KW-0964">Secreted</keyword>
<keyword id="KW-0732">Signal</keyword>
<accession>P01173</accession>
<accession>P70230</accession>
<accession>Q61023</accession>
<protein>
    <recommendedName>
        <fullName>Whey acidic protein</fullName>
        <shortName>WAP</shortName>
    </recommendedName>
</protein>
<comment type="function">
    <text>Could be a protease inhibitor. May play an important role in mammary gland development and tissue remodeling.</text>
</comment>
<comment type="subcellular location">
    <subcellularLocation>
        <location>Secreted</location>
    </subcellularLocation>
</comment>
<comment type="tissue specificity">
    <text>Milk-specific; major protein component of milk whey.</text>
</comment>
<comment type="PTM">
    <text>No phosphate or carbohydrate binding could be detected; however, both cholesterol and triglyceride are associated with the mouse protein.</text>
</comment>
<sequence>MRCLISLVLGLLALEVALAQNLEEQVFNSVQSMFQKASPIEGTECIICQTNEECAQNAMCCPGSCGRTRKTPVNIGVPKAGFCPWNLLQTISSTGPCPMKIECSSDRECSGNMKCCNVDCVMTCTPPVPVITLQ</sequence>
<reference key="1">
    <citation type="journal article" date="1982" name="Nucleic Acids Res.">
        <title>Mouse whey acidic protein is a novel member of the family of 'four-disulfide core' proteins.</title>
        <authorList>
            <person name="Hennighausen L.G."/>
            <person name="Sippel A.E."/>
        </authorList>
    </citation>
    <scope>NUCLEOTIDE SEQUENCE [MRNA]</scope>
</reference>
<reference key="2">
    <citation type="journal article" date="1984" name="Nucleic Acids Res.">
        <title>Comparison of the whey acidic protein genes of the rat and mouse.</title>
        <authorList>
            <person name="Campbell S.M."/>
            <person name="Rosen J.M."/>
            <person name="Hennighausen L.G."/>
            <person name="Strech-Jurk U."/>
            <person name="Sippel A.E."/>
        </authorList>
    </citation>
    <scope>NUCLEOTIDE SEQUENCE [GENOMIC DNA]</scope>
</reference>
<reference key="3">
    <citation type="submission" date="1995-10" db="EMBL/GenBank/DDBJ databases">
        <authorList>
            <person name="Hennighausen L."/>
        </authorList>
    </citation>
    <scope>NUCLEOTIDE SEQUENCE [GENOMIC DNA]</scope>
    <source>
        <strain>GR</strain>
    </source>
</reference>
<reference key="4">
    <citation type="journal article" date="1981" name="J. Biol. Chem.">
        <title>Biochemical characterization of a novel whey protein from murine milk.</title>
        <authorList>
            <person name="Piletz J.E."/>
            <person name="Heinlen M."/>
            <person name="Ganschow R.E."/>
        </authorList>
    </citation>
    <scope>CHARACTERIZATION</scope>
    <source>
        <strain>YBR</strain>
    </source>
</reference>
<proteinExistence type="evidence at protein level"/>
<name>WAP_MOUSE</name>
<evidence type="ECO:0000250" key="1"/>
<evidence type="ECO:0000255" key="2">
    <source>
        <dbReference type="PROSITE-ProRule" id="PRU00722"/>
    </source>
</evidence>
<evidence type="ECO:0000305" key="3"/>
<feature type="signal peptide" evidence="1">
    <location>
        <begin position="1"/>
        <end position="19"/>
    </location>
</feature>
<feature type="chain" id="PRO_0000041350" description="Whey acidic protein">
    <location>
        <begin position="20"/>
        <end position="134"/>
    </location>
</feature>
<feature type="domain" description="WAP 1; atypical" evidence="2">
    <location>
        <begin position="27"/>
        <end position="73"/>
    </location>
</feature>
<feature type="domain" description="WAP 2" evidence="2">
    <location>
        <begin position="76"/>
        <end position="128"/>
    </location>
</feature>
<feature type="disulfide bond" evidence="2">
    <location>
        <begin position="45"/>
        <end position="65"/>
    </location>
</feature>
<feature type="disulfide bond" evidence="2">
    <location>
        <begin position="48"/>
        <end position="60"/>
    </location>
</feature>
<feature type="disulfide bond" evidence="2">
    <location>
        <begin position="83"/>
        <end position="116"/>
    </location>
</feature>
<feature type="disulfide bond" evidence="2">
    <location>
        <begin position="97"/>
        <end position="120"/>
    </location>
</feature>
<feature type="disulfide bond" evidence="2">
    <location>
        <begin position="103"/>
        <end position="115"/>
    </location>
</feature>
<feature type="disulfide bond" evidence="2">
    <location>
        <begin position="109"/>
        <end position="124"/>
    </location>
</feature>
<feature type="sequence conflict" description="In Ref. 2; CAA25604." evidence="3" ref="2">
    <original>R</original>
    <variation>S</variation>
    <location>
        <position position="2"/>
    </location>
</feature>
<feature type="sequence conflict" description="In Ref. 3; AAA91321." evidence="3" ref="3">
    <original>L</original>
    <variation>R</variation>
    <location>
        <position position="11"/>
    </location>
</feature>
<feature type="sequence conflict" description="In Ref. 1; CAA24224." evidence="3" ref="1">
    <original>Q</original>
    <variation>P</variation>
    <location>
        <position position="35"/>
    </location>
</feature>
<feature type="sequence conflict" description="In Ref. 1; CAA24224." evidence="3" ref="1">
    <original>G</original>
    <variation>R</variation>
    <location>
        <position position="63"/>
    </location>
</feature>
<feature type="sequence conflict" description="In Ref. 2; CAA25604." evidence="3" ref="2">
    <original>G</original>
    <variation>V</variation>
    <location>
        <position position="63"/>
    </location>
</feature>
<feature type="sequence conflict" description="In Ref. 2; CAA25604." evidence="3" ref="2">
    <original>L</original>
    <variation>S</variation>
    <location>
        <position position="87"/>
    </location>
</feature>
<feature type="sequence conflict" description="In Ref. 1; CAA24224." evidence="3" ref="1">
    <original>K</original>
    <variation>Q</variation>
    <location>
        <position position="100"/>
    </location>
</feature>
<organism>
    <name type="scientific">Mus musculus</name>
    <name type="common">Mouse</name>
    <dbReference type="NCBI Taxonomy" id="10090"/>
    <lineage>
        <taxon>Eukaryota</taxon>
        <taxon>Metazoa</taxon>
        <taxon>Chordata</taxon>
        <taxon>Craniata</taxon>
        <taxon>Vertebrata</taxon>
        <taxon>Euteleostomi</taxon>
        <taxon>Mammalia</taxon>
        <taxon>Eutheria</taxon>
        <taxon>Euarchontoglires</taxon>
        <taxon>Glires</taxon>
        <taxon>Rodentia</taxon>
        <taxon>Myomorpha</taxon>
        <taxon>Muroidea</taxon>
        <taxon>Muridae</taxon>
        <taxon>Murinae</taxon>
        <taxon>Mus</taxon>
        <taxon>Mus</taxon>
    </lineage>
</organism>
<dbReference type="EMBL" id="V00856">
    <property type="protein sequence ID" value="CAA24224.1"/>
    <property type="molecule type" value="mRNA"/>
</dbReference>
<dbReference type="EMBL" id="X01157">
    <property type="protein sequence ID" value="CAA25604.1"/>
    <property type="molecule type" value="Genomic_DNA"/>
</dbReference>
<dbReference type="EMBL" id="X01158">
    <property type="protein sequence ID" value="CAA25604.1"/>
    <property type="status" value="JOINED"/>
    <property type="molecule type" value="Genomic_DNA"/>
</dbReference>
<dbReference type="EMBL" id="X01159">
    <property type="protein sequence ID" value="CAA25604.1"/>
    <property type="status" value="JOINED"/>
    <property type="molecule type" value="Genomic_DNA"/>
</dbReference>
<dbReference type="EMBL" id="X01160">
    <property type="protein sequence ID" value="CAA25604.1"/>
    <property type="status" value="JOINED"/>
    <property type="molecule type" value="Genomic_DNA"/>
</dbReference>
<dbReference type="EMBL" id="U38816">
    <property type="protein sequence ID" value="AAA91321.1"/>
    <property type="molecule type" value="Genomic_DNA"/>
</dbReference>
<dbReference type="CCDS" id="CCDS24424.1"/>
<dbReference type="PIR" id="A93423">
    <property type="entry name" value="WYMS"/>
</dbReference>
<dbReference type="SMR" id="P01173"/>
<dbReference type="FunCoup" id="P01173">
    <property type="interactions" value="54"/>
</dbReference>
<dbReference type="STRING" id="10090.ENSMUSP00000099974"/>
<dbReference type="PaxDb" id="10090-ENSMUSP00000099974"/>
<dbReference type="AGR" id="MGI:98943"/>
<dbReference type="MGI" id="MGI:98943">
    <property type="gene designation" value="Wap"/>
</dbReference>
<dbReference type="eggNOG" id="ENOG502RXHY">
    <property type="taxonomic scope" value="Eukaryota"/>
</dbReference>
<dbReference type="InParanoid" id="P01173"/>
<dbReference type="OrthoDB" id="6060011at2759"/>
<dbReference type="ChiTaRS" id="Wap">
    <property type="organism name" value="mouse"/>
</dbReference>
<dbReference type="PRO" id="PR:P01173"/>
<dbReference type="Proteomes" id="UP000000589">
    <property type="component" value="Unplaced"/>
</dbReference>
<dbReference type="RNAct" id="P01173">
    <property type="molecule type" value="protein"/>
</dbReference>
<dbReference type="GO" id="GO:0005576">
    <property type="term" value="C:extracellular region"/>
    <property type="evidence" value="ECO:0000314"/>
    <property type="project" value="MGI"/>
</dbReference>
<dbReference type="GO" id="GO:0045735">
    <property type="term" value="F:nutrient reservoir activity"/>
    <property type="evidence" value="ECO:0000315"/>
    <property type="project" value="MGI"/>
</dbReference>
<dbReference type="GO" id="GO:0030414">
    <property type="term" value="F:peptidase inhibitor activity"/>
    <property type="evidence" value="ECO:0007669"/>
    <property type="project" value="UniProtKB-KW"/>
</dbReference>
<dbReference type="CDD" id="cd00199">
    <property type="entry name" value="WAP"/>
    <property type="match status" value="1"/>
</dbReference>
<dbReference type="FunFam" id="4.10.75.10:FF:000008">
    <property type="entry name" value="Whey acidic protein"/>
    <property type="match status" value="1"/>
</dbReference>
<dbReference type="Gene3D" id="4.10.75.10">
    <property type="entry name" value="Elafin-like"/>
    <property type="match status" value="1"/>
</dbReference>
<dbReference type="InterPro" id="IPR036645">
    <property type="entry name" value="Elafin-like_sf"/>
</dbReference>
<dbReference type="InterPro" id="IPR008197">
    <property type="entry name" value="WAP_dom"/>
</dbReference>
<dbReference type="Pfam" id="PF00095">
    <property type="entry name" value="WAP"/>
    <property type="match status" value="1"/>
</dbReference>
<dbReference type="SMART" id="SM00217">
    <property type="entry name" value="WAP"/>
    <property type="match status" value="1"/>
</dbReference>
<dbReference type="SUPFAM" id="SSF57256">
    <property type="entry name" value="Elafin-like"/>
    <property type="match status" value="1"/>
</dbReference>
<dbReference type="PROSITE" id="PS51390">
    <property type="entry name" value="WAP"/>
    <property type="match status" value="2"/>
</dbReference>